<protein>
    <recommendedName>
        <fullName>Probable ribonucleotide transport ATP-binding protein mkl</fullName>
    </recommendedName>
</protein>
<name>MKL_MYCLE</name>
<reference key="1">
    <citation type="journal article" date="1993" name="Mol. Microbiol.">
        <title>Nucleotide sequence of the first cosmid from the Mycobacterium leprae genome project: structure and function of the Rif-Str regions.</title>
        <authorList>
            <person name="Honore N.T."/>
            <person name="Bergh S."/>
            <person name="Chanteau S."/>
            <person name="Doucet-Populaire F."/>
            <person name="Eiglmeier K."/>
            <person name="Garnier T."/>
            <person name="Georges C."/>
            <person name="Launois P."/>
            <person name="Limpaiboon T."/>
            <person name="Newton S."/>
            <person name="Niang K."/>
            <person name="del Portillo P."/>
            <person name="Ramesh G.R."/>
            <person name="Reddi P."/>
            <person name="Ridel P.R."/>
            <person name="Sittisombut N."/>
            <person name="Wu-Hunter S."/>
            <person name="Cole S.T."/>
        </authorList>
    </citation>
    <scope>NUCLEOTIDE SEQUENCE [GENOMIC DNA]</scope>
</reference>
<reference key="2">
    <citation type="journal article" date="2001" name="Nature">
        <title>Massive gene decay in the leprosy bacillus.</title>
        <authorList>
            <person name="Cole S.T."/>
            <person name="Eiglmeier K."/>
            <person name="Parkhill J."/>
            <person name="James K.D."/>
            <person name="Thomson N.R."/>
            <person name="Wheeler P.R."/>
            <person name="Honore N."/>
            <person name="Garnier T."/>
            <person name="Churcher C.M."/>
            <person name="Harris D.E."/>
            <person name="Mungall K.L."/>
            <person name="Basham D."/>
            <person name="Brown D."/>
            <person name="Chillingworth T."/>
            <person name="Connor R."/>
            <person name="Davies R.M."/>
            <person name="Devlin K."/>
            <person name="Duthoy S."/>
            <person name="Feltwell T."/>
            <person name="Fraser A."/>
            <person name="Hamlin N."/>
            <person name="Holroyd S."/>
            <person name="Hornsby T."/>
            <person name="Jagels K."/>
            <person name="Lacroix C."/>
            <person name="Maclean J."/>
            <person name="Moule S."/>
            <person name="Murphy L.D."/>
            <person name="Oliver K."/>
            <person name="Quail M.A."/>
            <person name="Rajandream M.A."/>
            <person name="Rutherford K.M."/>
            <person name="Rutter S."/>
            <person name="Seeger K."/>
            <person name="Simon S."/>
            <person name="Simmonds M."/>
            <person name="Skelton J."/>
            <person name="Squares R."/>
            <person name="Squares S."/>
            <person name="Stevens K."/>
            <person name="Taylor K."/>
            <person name="Whitehead S."/>
            <person name="Woodward J.R."/>
            <person name="Barrell B.G."/>
        </authorList>
    </citation>
    <scope>NUCLEOTIDE SEQUENCE [LARGE SCALE GENOMIC DNA]</scope>
    <source>
        <strain>TN</strain>
    </source>
</reference>
<feature type="chain" id="PRO_0000092520" description="Probable ribonucleotide transport ATP-binding protein mkl">
    <location>
        <begin position="1"/>
        <end position="347"/>
    </location>
</feature>
<feature type="domain" description="ABC transporter" evidence="1">
    <location>
        <begin position="16"/>
        <end position="252"/>
    </location>
</feature>
<feature type="binding site" evidence="1">
    <location>
        <begin position="48"/>
        <end position="55"/>
    </location>
    <ligand>
        <name>ATP</name>
        <dbReference type="ChEBI" id="CHEBI:30616"/>
    </ligand>
</feature>
<feature type="sequence conflict" description="In Ref. 1; CAA78667." evidence="2" ref="1">
    <original>KRA</original>
    <variation>NVP</variation>
    <location>
        <begin position="158"/>
        <end position="160"/>
    </location>
</feature>
<comment type="function">
    <text>Not known, could be involved in the transport of ribonucleotides.</text>
</comment>
<comment type="similarity">
    <text evidence="2">Belongs to the ABC transporter superfamily.</text>
</comment>
<comment type="sequence caution" evidence="2">
    <conflict type="erroneous initiation">
        <sequence resource="EMBL-CDS" id="CAC30846"/>
    </conflict>
</comment>
<accession>P30769</accession>
<accession>Q9CBK8</accession>
<evidence type="ECO:0000255" key="1">
    <source>
        <dbReference type="PROSITE-ProRule" id="PRU00434"/>
    </source>
</evidence>
<evidence type="ECO:0000305" key="2"/>
<dbReference type="EMBL" id="Z14314">
    <property type="protein sequence ID" value="CAA78667.1"/>
    <property type="molecule type" value="Genomic_DNA"/>
</dbReference>
<dbReference type="EMBL" id="AL583923">
    <property type="protein sequence ID" value="CAC30846.1"/>
    <property type="status" value="ALT_INIT"/>
    <property type="molecule type" value="Genomic_DNA"/>
</dbReference>
<dbReference type="PIR" id="F87145">
    <property type="entry name" value="F87145"/>
</dbReference>
<dbReference type="PIR" id="S31144">
    <property type="entry name" value="S31144"/>
</dbReference>
<dbReference type="SMR" id="P30769"/>
<dbReference type="STRING" id="272631.gene:17575740"/>
<dbReference type="KEGG" id="mle:ML1892"/>
<dbReference type="Leproma" id="ML1892"/>
<dbReference type="eggNOG" id="COG1127">
    <property type="taxonomic scope" value="Bacteria"/>
</dbReference>
<dbReference type="HOGENOM" id="CLU_000604_1_0_11"/>
<dbReference type="Proteomes" id="UP000000806">
    <property type="component" value="Chromosome"/>
</dbReference>
<dbReference type="GO" id="GO:0005524">
    <property type="term" value="F:ATP binding"/>
    <property type="evidence" value="ECO:0007669"/>
    <property type="project" value="UniProtKB-KW"/>
</dbReference>
<dbReference type="GO" id="GO:0016887">
    <property type="term" value="F:ATP hydrolysis activity"/>
    <property type="evidence" value="ECO:0007669"/>
    <property type="project" value="InterPro"/>
</dbReference>
<dbReference type="CDD" id="cd03261">
    <property type="entry name" value="ABC_Org_Solvent_Resistant"/>
    <property type="match status" value="1"/>
</dbReference>
<dbReference type="FunFam" id="3.40.50.300:FF:000192">
    <property type="entry name" value="Phospholipid ABC transporter ATP-binding protein MlaF"/>
    <property type="match status" value="1"/>
</dbReference>
<dbReference type="Gene3D" id="3.40.50.300">
    <property type="entry name" value="P-loop containing nucleotide triphosphate hydrolases"/>
    <property type="match status" value="1"/>
</dbReference>
<dbReference type="InterPro" id="IPR003593">
    <property type="entry name" value="AAA+_ATPase"/>
</dbReference>
<dbReference type="InterPro" id="IPR003439">
    <property type="entry name" value="ABC_transporter-like_ATP-bd"/>
</dbReference>
<dbReference type="InterPro" id="IPR017871">
    <property type="entry name" value="ABC_transporter-like_CS"/>
</dbReference>
<dbReference type="InterPro" id="IPR027417">
    <property type="entry name" value="P-loop_NTPase"/>
</dbReference>
<dbReference type="PANTHER" id="PTHR43023:SF6">
    <property type="entry name" value="INTERMEMBRANE PHOSPHOLIPID TRANSPORT SYSTEM ATP-BINDING PROTEIN MLAF"/>
    <property type="match status" value="1"/>
</dbReference>
<dbReference type="PANTHER" id="PTHR43023">
    <property type="entry name" value="PROTEIN TRIGALACTOSYLDIACYLGLYCEROL 3, CHLOROPLASTIC"/>
    <property type="match status" value="1"/>
</dbReference>
<dbReference type="Pfam" id="PF00005">
    <property type="entry name" value="ABC_tran"/>
    <property type="match status" value="1"/>
</dbReference>
<dbReference type="SMART" id="SM00382">
    <property type="entry name" value="AAA"/>
    <property type="match status" value="1"/>
</dbReference>
<dbReference type="SUPFAM" id="SSF52540">
    <property type="entry name" value="P-loop containing nucleoside triphosphate hydrolases"/>
    <property type="match status" value="1"/>
</dbReference>
<dbReference type="PROSITE" id="PS00211">
    <property type="entry name" value="ABC_TRANSPORTER_1"/>
    <property type="match status" value="1"/>
</dbReference>
<dbReference type="PROSITE" id="PS50893">
    <property type="entry name" value="ABC_TRANSPORTER_2"/>
    <property type="match status" value="1"/>
</dbReference>
<organism>
    <name type="scientific">Mycobacterium leprae (strain TN)</name>
    <dbReference type="NCBI Taxonomy" id="272631"/>
    <lineage>
        <taxon>Bacteria</taxon>
        <taxon>Bacillati</taxon>
        <taxon>Actinomycetota</taxon>
        <taxon>Actinomycetes</taxon>
        <taxon>Mycobacteriales</taxon>
        <taxon>Mycobacteriaceae</taxon>
        <taxon>Mycobacterium</taxon>
    </lineage>
</organism>
<sequence length="347" mass="37628">MAAIGGDGRMPMGVAIEVKGLTKSFGSSRIWEDVTLDIPAGEVSVLLGPSGTGKSVFLKSLIGLLRPERGSILIDGTDIIECSAKELYEIRTLFGVLFQDGALFGSMNLYDNTAFPLREHTKKKESEIRDIVMEKLQLVGLGGDEKKFPGEISGGMRKRAGLARALVLDPQIILCDEPDSGLDPVRTAYLSQLIMDINAQIDATILIVTHNVNIARTVPDNMGMLFRKHLVMFGPREVLLTSDEPVVRQFLNGRRIGPIGMSEEKDESTMAEEAALLEAGHYAGGAEEVEGVPPQITVTPGMPKRKAVARRQARVRAMLPTLPKGAQAAILDDLEGAHNYQAHEFGD</sequence>
<keyword id="KW-0067">ATP-binding</keyword>
<keyword id="KW-0547">Nucleotide-binding</keyword>
<keyword id="KW-1185">Reference proteome</keyword>
<keyword id="KW-0813">Transport</keyword>
<gene>
    <name type="primary">mkl</name>
    <name type="ordered locus">ML1892</name>
</gene>
<proteinExistence type="inferred from homology"/>